<organism>
    <name type="scientific">Enterobacter sp. (strain 638)</name>
    <dbReference type="NCBI Taxonomy" id="399742"/>
    <lineage>
        <taxon>Bacteria</taxon>
        <taxon>Pseudomonadati</taxon>
        <taxon>Pseudomonadota</taxon>
        <taxon>Gammaproteobacteria</taxon>
        <taxon>Enterobacterales</taxon>
        <taxon>Enterobacteriaceae</taxon>
        <taxon>Enterobacter</taxon>
    </lineage>
</organism>
<feature type="chain" id="PRO_1000060314" description="Fluoride-specific ion channel FluC">
    <location>
        <begin position="1"/>
        <end position="127"/>
    </location>
</feature>
<feature type="transmembrane region" description="Helical" evidence="1">
    <location>
        <begin position="4"/>
        <end position="24"/>
    </location>
</feature>
<feature type="transmembrane region" description="Helical" evidence="1">
    <location>
        <begin position="35"/>
        <end position="55"/>
    </location>
</feature>
<feature type="transmembrane region" description="Helical" evidence="1">
    <location>
        <begin position="71"/>
        <end position="91"/>
    </location>
</feature>
<feature type="transmembrane region" description="Helical" evidence="1">
    <location>
        <begin position="103"/>
        <end position="123"/>
    </location>
</feature>
<feature type="binding site" evidence="1">
    <location>
        <position position="75"/>
    </location>
    <ligand>
        <name>Na(+)</name>
        <dbReference type="ChEBI" id="CHEBI:29101"/>
        <note>structural</note>
    </ligand>
</feature>
<feature type="binding site" evidence="1">
    <location>
        <position position="78"/>
    </location>
    <ligand>
        <name>Na(+)</name>
        <dbReference type="ChEBI" id="CHEBI:29101"/>
        <note>structural</note>
    </ligand>
</feature>
<sequence>MLQLLLAVFIGGGTGSVARWFLSMRFNPMHQAIPLGTLTANLIGAFIIGVGLAWFNRMTHIDPMWKLLITTGFCGGLTTFSTFSAEVVFLLQDGRINWALANIAVNMLGSFAMTALAFWLFSAASAH</sequence>
<protein>
    <recommendedName>
        <fullName evidence="1">Fluoride-specific ion channel FluC</fullName>
    </recommendedName>
</protein>
<name>FLUC_ENT38</name>
<proteinExistence type="inferred from homology"/>
<comment type="function">
    <text evidence="1">Fluoride-specific ion channel. Important for reducing fluoride concentration in the cell, thus reducing its toxicity.</text>
</comment>
<comment type="catalytic activity">
    <reaction evidence="1">
        <text>fluoride(in) = fluoride(out)</text>
        <dbReference type="Rhea" id="RHEA:76159"/>
        <dbReference type="ChEBI" id="CHEBI:17051"/>
    </reaction>
    <physiologicalReaction direction="left-to-right" evidence="1">
        <dbReference type="Rhea" id="RHEA:76160"/>
    </physiologicalReaction>
</comment>
<comment type="activity regulation">
    <text evidence="1">Na(+) is not transported, but it plays an essential structural role and its presence is essential for fluoride channel function.</text>
</comment>
<comment type="subcellular location">
    <subcellularLocation>
        <location evidence="1">Cell inner membrane</location>
        <topology evidence="1">Multi-pass membrane protein</topology>
    </subcellularLocation>
</comment>
<comment type="similarity">
    <text evidence="1">Belongs to the fluoride channel Fluc/FEX (TC 1.A.43) family.</text>
</comment>
<evidence type="ECO:0000255" key="1">
    <source>
        <dbReference type="HAMAP-Rule" id="MF_00454"/>
    </source>
</evidence>
<reference key="1">
    <citation type="journal article" date="2010" name="PLoS Genet.">
        <title>Genome sequence of the plant growth promoting endophytic bacterium Enterobacter sp. 638.</title>
        <authorList>
            <person name="Taghavi S."/>
            <person name="van der Lelie D."/>
            <person name="Hoffman A."/>
            <person name="Zhang Y.B."/>
            <person name="Walla M.D."/>
            <person name="Vangronsveld J."/>
            <person name="Newman L."/>
            <person name="Monchy S."/>
        </authorList>
    </citation>
    <scope>NUCLEOTIDE SEQUENCE [LARGE SCALE GENOMIC DNA]</scope>
    <source>
        <strain>638</strain>
    </source>
</reference>
<keyword id="KW-0997">Cell inner membrane</keyword>
<keyword id="KW-1003">Cell membrane</keyword>
<keyword id="KW-0407">Ion channel</keyword>
<keyword id="KW-0406">Ion transport</keyword>
<keyword id="KW-0472">Membrane</keyword>
<keyword id="KW-0479">Metal-binding</keyword>
<keyword id="KW-0915">Sodium</keyword>
<keyword id="KW-0812">Transmembrane</keyword>
<keyword id="KW-1133">Transmembrane helix</keyword>
<keyword id="KW-0813">Transport</keyword>
<dbReference type="EMBL" id="CP000653">
    <property type="protein sequence ID" value="ABP59841.1"/>
    <property type="molecule type" value="Genomic_DNA"/>
</dbReference>
<dbReference type="RefSeq" id="WP_012016560.1">
    <property type="nucleotide sequence ID" value="NC_009436.1"/>
</dbReference>
<dbReference type="SMR" id="A4W811"/>
<dbReference type="STRING" id="399742.Ent638_1160"/>
<dbReference type="KEGG" id="ent:Ent638_1160"/>
<dbReference type="eggNOG" id="COG0239">
    <property type="taxonomic scope" value="Bacteria"/>
</dbReference>
<dbReference type="HOGENOM" id="CLU_114342_3_3_6"/>
<dbReference type="OrthoDB" id="9806299at2"/>
<dbReference type="Proteomes" id="UP000000230">
    <property type="component" value="Chromosome"/>
</dbReference>
<dbReference type="GO" id="GO:0005886">
    <property type="term" value="C:plasma membrane"/>
    <property type="evidence" value="ECO:0007669"/>
    <property type="project" value="UniProtKB-SubCell"/>
</dbReference>
<dbReference type="GO" id="GO:0062054">
    <property type="term" value="F:fluoride channel activity"/>
    <property type="evidence" value="ECO:0007669"/>
    <property type="project" value="UniProtKB-UniRule"/>
</dbReference>
<dbReference type="GO" id="GO:0046872">
    <property type="term" value="F:metal ion binding"/>
    <property type="evidence" value="ECO:0007669"/>
    <property type="project" value="UniProtKB-KW"/>
</dbReference>
<dbReference type="GO" id="GO:0140114">
    <property type="term" value="P:cellular detoxification of fluoride"/>
    <property type="evidence" value="ECO:0007669"/>
    <property type="project" value="UniProtKB-UniRule"/>
</dbReference>
<dbReference type="HAMAP" id="MF_00454">
    <property type="entry name" value="FluC"/>
    <property type="match status" value="1"/>
</dbReference>
<dbReference type="InterPro" id="IPR003691">
    <property type="entry name" value="FluC"/>
</dbReference>
<dbReference type="NCBIfam" id="TIGR00494">
    <property type="entry name" value="crcB"/>
    <property type="match status" value="1"/>
</dbReference>
<dbReference type="NCBIfam" id="NF010792">
    <property type="entry name" value="PRK14196.1"/>
    <property type="match status" value="1"/>
</dbReference>
<dbReference type="PANTHER" id="PTHR28259">
    <property type="entry name" value="FLUORIDE EXPORT PROTEIN 1-RELATED"/>
    <property type="match status" value="1"/>
</dbReference>
<dbReference type="PANTHER" id="PTHR28259:SF1">
    <property type="entry name" value="FLUORIDE EXPORT PROTEIN 1-RELATED"/>
    <property type="match status" value="1"/>
</dbReference>
<dbReference type="Pfam" id="PF02537">
    <property type="entry name" value="CRCB"/>
    <property type="match status" value="1"/>
</dbReference>
<gene>
    <name evidence="1" type="primary">fluC</name>
    <name evidence="1" type="synonym">crcB</name>
    <name type="ordered locus">Ent638_1160</name>
</gene>
<accession>A4W811</accession>